<accession>P21057</accession>
<dbReference type="EMBL" id="M35027">
    <property type="protein sequence ID" value="AAA48161.1"/>
    <property type="molecule type" value="Genomic_DNA"/>
</dbReference>
<dbReference type="PIR" id="I42520">
    <property type="entry name" value="I42520"/>
</dbReference>
<dbReference type="SMR" id="P21057"/>
<dbReference type="Proteomes" id="UP000008269">
    <property type="component" value="Segment"/>
</dbReference>
<dbReference type="GO" id="GO:0044177">
    <property type="term" value="C:host cell Golgi apparatus"/>
    <property type="evidence" value="ECO:0007669"/>
    <property type="project" value="UniProtKB-SubCell"/>
</dbReference>
<dbReference type="GO" id="GO:0016020">
    <property type="term" value="C:membrane"/>
    <property type="evidence" value="ECO:0007669"/>
    <property type="project" value="UniProtKB-KW"/>
</dbReference>
<dbReference type="GO" id="GO:0055036">
    <property type="term" value="C:virion membrane"/>
    <property type="evidence" value="ECO:0007669"/>
    <property type="project" value="UniProtKB-SubCell"/>
</dbReference>
<dbReference type="Gene3D" id="3.10.100.10">
    <property type="entry name" value="Mannose-Binding Protein A, subunit A"/>
    <property type="match status" value="1"/>
</dbReference>
<dbReference type="InterPro" id="IPR001304">
    <property type="entry name" value="C-type_lectin-like"/>
</dbReference>
<dbReference type="InterPro" id="IPR016186">
    <property type="entry name" value="C-type_lectin-like/link_sf"/>
</dbReference>
<dbReference type="InterPro" id="IPR016187">
    <property type="entry name" value="CTDL_fold"/>
</dbReference>
<dbReference type="Pfam" id="PF00059">
    <property type="entry name" value="Lectin_C"/>
    <property type="match status" value="1"/>
</dbReference>
<dbReference type="SUPFAM" id="SSF56436">
    <property type="entry name" value="C-type lectin-like"/>
    <property type="match status" value="1"/>
</dbReference>
<keyword id="KW-1015">Disulfide bond</keyword>
<keyword id="KW-0325">Glycoprotein</keyword>
<keyword id="KW-1040">Host Golgi apparatus</keyword>
<keyword id="KW-0472">Membrane</keyword>
<keyword id="KW-1185">Reference proteome</keyword>
<keyword id="KW-0735">Signal-anchor</keyword>
<keyword id="KW-0812">Transmembrane</keyword>
<keyword id="KW-1133">Transmembrane helix</keyword>
<keyword id="KW-0946">Virion</keyword>
<reference key="1">
    <citation type="journal article" date="1990" name="Virology">
        <title>The complete DNA sequence of vaccinia virus.</title>
        <authorList>
            <person name="Goebel S.J."/>
            <person name="Johnson G.P."/>
            <person name="Perkus M.E."/>
            <person name="Davis S.W."/>
            <person name="Winslow J.P."/>
            <person name="Paoletti E."/>
        </authorList>
    </citation>
    <scope>NUCLEOTIDE SEQUENCE [LARGE SCALE GENOMIC DNA]</scope>
</reference>
<reference key="2">
    <citation type="journal article" date="1990" name="Virology">
        <title>Appendix to 'The complete DNA sequence of vaccinia virus'.</title>
        <authorList>
            <person name="Goebel S.J."/>
            <person name="Johnson G.P."/>
            <person name="Perkus M.E."/>
            <person name="Davis S.W."/>
            <person name="Winslow J.P."/>
            <person name="Paoletti E."/>
        </authorList>
    </citation>
    <scope>NUCLEOTIDE SEQUENCE [LARGE SCALE GENOMIC DNA]</scope>
</reference>
<sequence length="168" mass="19529">MKSLNRQTVSMFKKLSVPAAIMMILSTIISGIGTFLHYKEELMPSACANGWIQYDKHCYLDTNIKMSTDNAVYQCRKLRARLPRPDTRHLRVLFSIFYKDYWVSLKKTNNKWLDINNDKDIDISKLTNFKQLNSTTDAEACYIYKSGKLVKTVCKSTQSVLCVKKFYK</sequence>
<proteinExistence type="inferred from homology"/>
<organismHost>
    <name type="scientific">Homo sapiens</name>
    <name type="common">Human</name>
    <dbReference type="NCBI Taxonomy" id="9606"/>
</organismHost>
<evidence type="ECO:0000250" key="1"/>
<evidence type="ECO:0000250" key="2">
    <source>
        <dbReference type="UniProtKB" id="P24761"/>
    </source>
</evidence>
<evidence type="ECO:0000255" key="3"/>
<evidence type="ECO:0000305" key="4"/>
<protein>
    <recommendedName>
        <fullName>Protein OPG162</fullName>
    </recommendedName>
</protein>
<organism>
    <name type="scientific">Vaccinia virus (strain Copenhagen)</name>
    <name type="common">VACV</name>
    <dbReference type="NCBI Taxonomy" id="10249"/>
    <lineage>
        <taxon>Viruses</taxon>
        <taxon>Varidnaviria</taxon>
        <taxon>Bamfordvirae</taxon>
        <taxon>Nucleocytoviricota</taxon>
        <taxon>Pokkesviricetes</taxon>
        <taxon>Chitovirales</taxon>
        <taxon>Poxviridae</taxon>
        <taxon>Chordopoxvirinae</taxon>
        <taxon>Orthopoxvirus</taxon>
        <taxon>Vaccinia virus</taxon>
    </lineage>
</organism>
<name>PG162_VACCC</name>
<feature type="chain" id="PRO_0000099319" description="Protein OPG162">
    <location>
        <begin position="1"/>
        <end position="168"/>
    </location>
</feature>
<feature type="topological domain" description="Intravirion">
    <location>
        <begin position="1"/>
        <end position="14"/>
    </location>
</feature>
<feature type="transmembrane region" description="Helical" evidence="3">
    <location>
        <begin position="15"/>
        <end position="37"/>
    </location>
</feature>
<feature type="topological domain" description="Virion surface" evidence="3">
    <location>
        <begin position="38"/>
        <end position="168"/>
    </location>
</feature>
<feature type="domain" description="C-type lectin">
    <location>
        <begin position="54"/>
        <end position="163"/>
    </location>
</feature>
<feature type="glycosylation site" description="N-linked (GlcNAc...) asparagine; by host" evidence="3">
    <location>
        <position position="133"/>
    </location>
</feature>
<feature type="disulfide bond" evidence="1">
    <location>
        <begin position="75"/>
        <end position="162"/>
    </location>
</feature>
<feature type="disulfide bond" evidence="1">
    <location>
        <begin position="141"/>
        <end position="154"/>
    </location>
</feature>
<gene>
    <name type="primary">OPG162</name>
    <name type="ORF">A34R</name>
</gene>
<comment type="function">
    <text evidence="2">Forms a complex with OPG162 and OPG190 to coordinate the incorporation of OPG164 into wrapped enveloped virion (EV) membranes and, subsequently, the production of actin tails. Therefore plays an essential role in efficient cell-to-cell spread of viral particles.</text>
</comment>
<comment type="subunit">
    <text evidence="2">Interacts with protein OPG161. Interacts with protein OPG164. Interacts with protein OPG190.</text>
</comment>
<comment type="subcellular location">
    <subcellularLocation>
        <location evidence="2">Virion membrane</location>
        <topology evidence="2">Single-pass type II membrane protein</topology>
    </subcellularLocation>
    <subcellularLocation>
        <location evidence="2">Host Golgi apparatus</location>
    </subcellularLocation>
    <text evidence="2">Present in the enveloped virion (EV) membrane.</text>
</comment>
<comment type="similarity">
    <text evidence="4">Belongs to the orthopoxvirus OPG162 protein family.</text>
</comment>